<dbReference type="EC" id="2.7.8.-" evidence="1"/>
<dbReference type="EMBL" id="CT573326">
    <property type="protein sequence ID" value="CAK18126.1"/>
    <property type="molecule type" value="Genomic_DNA"/>
</dbReference>
<dbReference type="RefSeq" id="WP_011536478.1">
    <property type="nucleotide sequence ID" value="NC_008027.1"/>
</dbReference>
<dbReference type="SMR" id="Q1I2L0"/>
<dbReference type="STRING" id="384676.PSEEN5517"/>
<dbReference type="GeneID" id="32808420"/>
<dbReference type="KEGG" id="pen:PSEEN5517"/>
<dbReference type="eggNOG" id="COG1502">
    <property type="taxonomic scope" value="Bacteria"/>
</dbReference>
<dbReference type="HOGENOM" id="CLU_038053_1_0_6"/>
<dbReference type="OrthoDB" id="9762009at2"/>
<dbReference type="Proteomes" id="UP000000658">
    <property type="component" value="Chromosome"/>
</dbReference>
<dbReference type="GO" id="GO:0005886">
    <property type="term" value="C:plasma membrane"/>
    <property type="evidence" value="ECO:0007669"/>
    <property type="project" value="UniProtKB-SubCell"/>
</dbReference>
<dbReference type="GO" id="GO:0008808">
    <property type="term" value="F:cardiolipin synthase activity"/>
    <property type="evidence" value="ECO:0007669"/>
    <property type="project" value="InterPro"/>
</dbReference>
<dbReference type="GO" id="GO:0032049">
    <property type="term" value="P:cardiolipin biosynthetic process"/>
    <property type="evidence" value="ECO:0007669"/>
    <property type="project" value="InterPro"/>
</dbReference>
<dbReference type="CDD" id="cd09155">
    <property type="entry name" value="PLDc_PaCLS_like_1"/>
    <property type="match status" value="1"/>
</dbReference>
<dbReference type="CDD" id="cd09161">
    <property type="entry name" value="PLDc_PaCLS_like_2"/>
    <property type="match status" value="1"/>
</dbReference>
<dbReference type="FunFam" id="3.30.870.10:FF:000014">
    <property type="entry name" value="Cardiolipin synthase"/>
    <property type="match status" value="1"/>
</dbReference>
<dbReference type="FunFam" id="3.30.870.10:FF:000021">
    <property type="entry name" value="Cardiolipin synthase"/>
    <property type="match status" value="1"/>
</dbReference>
<dbReference type="Gene3D" id="3.30.870.10">
    <property type="entry name" value="Endonuclease Chain A"/>
    <property type="match status" value="2"/>
</dbReference>
<dbReference type="HAMAP" id="MF_00190">
    <property type="entry name" value="Cardiolipin_synth_ClsA"/>
    <property type="match status" value="1"/>
</dbReference>
<dbReference type="InterPro" id="IPR022924">
    <property type="entry name" value="Cardiolipin_synthase"/>
</dbReference>
<dbReference type="InterPro" id="IPR030840">
    <property type="entry name" value="CL_synthase_A"/>
</dbReference>
<dbReference type="InterPro" id="IPR027379">
    <property type="entry name" value="CLS_N"/>
</dbReference>
<dbReference type="InterPro" id="IPR025202">
    <property type="entry name" value="PLD-like_dom"/>
</dbReference>
<dbReference type="InterPro" id="IPR001736">
    <property type="entry name" value="PLipase_D/transphosphatidylase"/>
</dbReference>
<dbReference type="NCBIfam" id="TIGR04265">
    <property type="entry name" value="bac_cardiolipin"/>
    <property type="match status" value="1"/>
</dbReference>
<dbReference type="PANTHER" id="PTHR21248">
    <property type="entry name" value="CARDIOLIPIN SYNTHASE"/>
    <property type="match status" value="1"/>
</dbReference>
<dbReference type="PANTHER" id="PTHR21248:SF22">
    <property type="entry name" value="PHOSPHOLIPASE D"/>
    <property type="match status" value="1"/>
</dbReference>
<dbReference type="Pfam" id="PF00614">
    <property type="entry name" value="PLDc"/>
    <property type="match status" value="1"/>
</dbReference>
<dbReference type="Pfam" id="PF13091">
    <property type="entry name" value="PLDc_2"/>
    <property type="match status" value="1"/>
</dbReference>
<dbReference type="Pfam" id="PF13396">
    <property type="entry name" value="PLDc_N"/>
    <property type="match status" value="1"/>
</dbReference>
<dbReference type="SMART" id="SM00155">
    <property type="entry name" value="PLDc"/>
    <property type="match status" value="2"/>
</dbReference>
<dbReference type="SUPFAM" id="SSF56024">
    <property type="entry name" value="Phospholipase D/nuclease"/>
    <property type="match status" value="2"/>
</dbReference>
<dbReference type="PROSITE" id="PS50035">
    <property type="entry name" value="PLD"/>
    <property type="match status" value="2"/>
</dbReference>
<protein>
    <recommendedName>
        <fullName evidence="1">Cardiolipin synthase A</fullName>
        <shortName evidence="1">CL synthase</shortName>
        <ecNumber evidence="1">2.7.8.-</ecNumber>
    </recommendedName>
</protein>
<evidence type="ECO:0000255" key="1">
    <source>
        <dbReference type="HAMAP-Rule" id="MF_00190"/>
    </source>
</evidence>
<reference key="1">
    <citation type="journal article" date="2006" name="Nat. Biotechnol.">
        <title>Complete genome sequence of the entomopathogenic and metabolically versatile soil bacterium Pseudomonas entomophila.</title>
        <authorList>
            <person name="Vodovar N."/>
            <person name="Vallenet D."/>
            <person name="Cruveiller S."/>
            <person name="Rouy Z."/>
            <person name="Barbe V."/>
            <person name="Acosta C."/>
            <person name="Cattolico L."/>
            <person name="Jubin C."/>
            <person name="Lajus A."/>
            <person name="Segurens B."/>
            <person name="Vacherie B."/>
            <person name="Wincker P."/>
            <person name="Weissenbach J."/>
            <person name="Lemaitre B."/>
            <person name="Medigue C."/>
            <person name="Boccard F."/>
        </authorList>
    </citation>
    <scope>NUCLEOTIDE SEQUENCE [LARGE SCALE GENOMIC DNA]</scope>
    <source>
        <strain>L48</strain>
    </source>
</reference>
<keyword id="KW-0997">Cell inner membrane</keyword>
<keyword id="KW-1003">Cell membrane</keyword>
<keyword id="KW-0444">Lipid biosynthesis</keyword>
<keyword id="KW-0443">Lipid metabolism</keyword>
<keyword id="KW-0472">Membrane</keyword>
<keyword id="KW-0594">Phospholipid biosynthesis</keyword>
<keyword id="KW-1208">Phospholipid metabolism</keyword>
<keyword id="KW-0677">Repeat</keyword>
<keyword id="KW-0808">Transferase</keyword>
<keyword id="KW-0812">Transmembrane</keyword>
<keyword id="KW-1133">Transmembrane helix</keyword>
<sequence length="479" mass="54017">MDYHSPYFFGYLIGLIHLLGIIAALHAVFTVRTAQGAIAWALSLLFIPYFTLIPYLIFGARSFYAYIQARRQANQEMHVAMANLNWRPWVEEALTARESDSYAALRAMPKLGRMPCLANNEVKLLIDGEATFKAIFAAIEAARNTVLVQFFIIHDDTLGKQLQRLLLRKAAEGVQVFVLYDRVGSHALPGSYSQVLRDGGVQIQAFATRRGWFNRFQVNFRNHRKIVVVDGLRGFLGGHNVGDEYLGANPHLSPWRDTHVQIAGPVLACLQESFAEDWYWATRQLPPLILPDTYPENGVLCQALASGPADPQETCALFFLEAIHSATRRVWITSPYFIPDEAIFAALRLAVLRGVDVRVLIPSRPDHRIVYAASSLFAFEAVRAGVRMFRYQPGFLHQKVVLVDDEVSAIGSANLDNRSFRLNFEITLLTVDRAFADQVEQMLQSDFDQAREITAEDSRDTHRLQQLGMRIARLISPIL</sequence>
<gene>
    <name evidence="1" type="primary">clsA</name>
    <name type="synonym">cls</name>
    <name type="ordered locus">PSEEN5517</name>
</gene>
<accession>Q1I2L0</accession>
<proteinExistence type="inferred from homology"/>
<comment type="function">
    <text evidence="1">Catalyzes the reversible phosphatidyl group transfer from one phosphatidylglycerol molecule to another to form cardiolipin (CL) (diphosphatidylglycerol) and glycerol.</text>
</comment>
<comment type="catalytic activity">
    <reaction evidence="1">
        <text>2 a 1,2-diacyl-sn-glycero-3-phospho-(1'-sn-glycerol) = a cardiolipin + glycerol</text>
        <dbReference type="Rhea" id="RHEA:31451"/>
        <dbReference type="ChEBI" id="CHEBI:17754"/>
        <dbReference type="ChEBI" id="CHEBI:62237"/>
        <dbReference type="ChEBI" id="CHEBI:64716"/>
    </reaction>
</comment>
<comment type="subcellular location">
    <subcellularLocation>
        <location evidence="1">Cell inner membrane</location>
        <topology evidence="1">Multi-pass membrane protein</topology>
    </subcellularLocation>
</comment>
<comment type="similarity">
    <text evidence="1">Belongs to the phospholipase D family. Cardiolipin synthase subfamily. ClsA sub-subfamily.</text>
</comment>
<organism>
    <name type="scientific">Pseudomonas entomophila (strain L48)</name>
    <dbReference type="NCBI Taxonomy" id="384676"/>
    <lineage>
        <taxon>Bacteria</taxon>
        <taxon>Pseudomonadati</taxon>
        <taxon>Pseudomonadota</taxon>
        <taxon>Gammaproteobacteria</taxon>
        <taxon>Pseudomonadales</taxon>
        <taxon>Pseudomonadaceae</taxon>
        <taxon>Pseudomonas</taxon>
    </lineage>
</organism>
<feature type="chain" id="PRO_1000077501" description="Cardiolipin synthase A">
    <location>
        <begin position="1"/>
        <end position="479"/>
    </location>
</feature>
<feature type="transmembrane region" description="Helical" evidence="1">
    <location>
        <begin position="8"/>
        <end position="28"/>
    </location>
</feature>
<feature type="transmembrane region" description="Helical" evidence="1">
    <location>
        <begin position="38"/>
        <end position="58"/>
    </location>
</feature>
<feature type="domain" description="PLD phosphodiesterase 1" evidence="1">
    <location>
        <begin position="218"/>
        <end position="245"/>
    </location>
</feature>
<feature type="domain" description="PLD phosphodiesterase 2" evidence="1">
    <location>
        <begin position="392"/>
        <end position="419"/>
    </location>
</feature>
<feature type="active site" evidence="1">
    <location>
        <position position="223"/>
    </location>
</feature>
<feature type="active site" evidence="1">
    <location>
        <position position="225"/>
    </location>
</feature>
<feature type="active site" evidence="1">
    <location>
        <position position="230"/>
    </location>
</feature>
<feature type="active site" evidence="1">
    <location>
        <position position="397"/>
    </location>
</feature>
<feature type="active site" evidence="1">
    <location>
        <position position="399"/>
    </location>
</feature>
<feature type="active site" evidence="1">
    <location>
        <position position="404"/>
    </location>
</feature>
<name>CLSA_PSEE4</name>